<name>GAL1_ECOLI</name>
<accession>P0A6T3</accession>
<accession>P06976</accession>
<organism>
    <name type="scientific">Escherichia coli (strain K12)</name>
    <dbReference type="NCBI Taxonomy" id="83333"/>
    <lineage>
        <taxon>Bacteria</taxon>
        <taxon>Pseudomonadati</taxon>
        <taxon>Pseudomonadota</taxon>
        <taxon>Gammaproteobacteria</taxon>
        <taxon>Enterobacterales</taxon>
        <taxon>Enterobacteriaceae</taxon>
        <taxon>Escherichia</taxon>
    </lineage>
</organism>
<sequence>MSLKEKTQSLFANAFGYPATHTIQAPGRVNLIGEHTDYNDGFVLPCAIDYQTVISCAPRDDRKVRVMAADYENQLDEFSLDAPIVAHENYQWANYVRGVVKHLQLRNNSFGGVDMVISGNVPQGAGLSSSASLEVAVGTVLQQLYHLPLDGAQIALNGQEAENQFVGCNCGIMDQLISALGKKDHALLIDCRSLGTKAVSMPKGVAVVIINSNFKRTLVGSEYNTRREQCETGARFFQQPALRDVTIEEFNAVAHELDPIVAKRVRHILTENARTVEAASALEQGDLKRMGELMAESHASMRDDFEITVPQIDTLVEIVKAVIGDKGGVRMTGGGFGGCIVALIPEELVPAVQQAVAEQYEAKTGIKETFYVCKPSQGAGQC</sequence>
<keyword id="KW-0067">ATP-binding</keyword>
<keyword id="KW-0119">Carbohydrate metabolism</keyword>
<keyword id="KW-0963">Cytoplasm</keyword>
<keyword id="KW-0903">Direct protein sequencing</keyword>
<keyword id="KW-0299">Galactose metabolism</keyword>
<keyword id="KW-0418">Kinase</keyword>
<keyword id="KW-0460">Magnesium</keyword>
<keyword id="KW-0479">Metal-binding</keyword>
<keyword id="KW-0547">Nucleotide-binding</keyword>
<keyword id="KW-1185">Reference proteome</keyword>
<keyword id="KW-0808">Transferase</keyword>
<reference key="1">
    <citation type="journal article" date="1985" name="Nucleic Acids Res.">
        <title>Structure of the galactokinase gene of Escherichia coli, the last (?) gene of the gal operon.</title>
        <authorList>
            <person name="Debouck C."/>
            <person name="Riccio A."/>
            <person name="Schumperli D."/>
            <person name="McKenney K."/>
            <person name="Jeffers J."/>
            <person name="Hughes C."/>
            <person name="Rosenberg M."/>
            <person name="Heusterspreute M."/>
            <person name="Brunel F."/>
            <person name="Davison J."/>
        </authorList>
    </citation>
    <scope>NUCLEOTIDE SEQUENCE [GENOMIC DNA]</scope>
</reference>
<reference key="2">
    <citation type="journal article" date="1996" name="DNA Res.">
        <title>A 718-kb DNA sequence of the Escherichia coli K-12 genome corresponding to the 12.7-28.0 min region on the linkage map.</title>
        <authorList>
            <person name="Oshima T."/>
            <person name="Aiba H."/>
            <person name="Baba T."/>
            <person name="Fujita K."/>
            <person name="Hayashi K."/>
            <person name="Honjo A."/>
            <person name="Ikemoto K."/>
            <person name="Inada T."/>
            <person name="Itoh T."/>
            <person name="Kajihara M."/>
            <person name="Kanai K."/>
            <person name="Kashimoto K."/>
            <person name="Kimura S."/>
            <person name="Kitagawa M."/>
            <person name="Makino K."/>
            <person name="Masuda S."/>
            <person name="Miki T."/>
            <person name="Mizobuchi K."/>
            <person name="Mori H."/>
            <person name="Motomura K."/>
            <person name="Nakamura Y."/>
            <person name="Nashimoto H."/>
            <person name="Nishio Y."/>
            <person name="Saito N."/>
            <person name="Sampei G."/>
            <person name="Seki Y."/>
            <person name="Tagami H."/>
            <person name="Takemoto K."/>
            <person name="Wada C."/>
            <person name="Yamamoto Y."/>
            <person name="Yano M."/>
            <person name="Horiuchi T."/>
        </authorList>
    </citation>
    <scope>NUCLEOTIDE SEQUENCE [LARGE SCALE GENOMIC DNA]</scope>
    <source>
        <strain>K12 / W3110 / ATCC 27325 / DSM 5911</strain>
    </source>
</reference>
<reference key="3">
    <citation type="journal article" date="1997" name="Science">
        <title>The complete genome sequence of Escherichia coli K-12.</title>
        <authorList>
            <person name="Blattner F.R."/>
            <person name="Plunkett G. III"/>
            <person name="Bloch C.A."/>
            <person name="Perna N.T."/>
            <person name="Burland V."/>
            <person name="Riley M."/>
            <person name="Collado-Vides J."/>
            <person name="Glasner J.D."/>
            <person name="Rode C.K."/>
            <person name="Mayhew G.F."/>
            <person name="Gregor J."/>
            <person name="Davis N.W."/>
            <person name="Kirkpatrick H.A."/>
            <person name="Goeden M.A."/>
            <person name="Rose D.J."/>
            <person name="Mau B."/>
            <person name="Shao Y."/>
        </authorList>
    </citation>
    <scope>NUCLEOTIDE SEQUENCE [LARGE SCALE GENOMIC DNA]</scope>
    <source>
        <strain>K12 / MG1655 / ATCC 47076</strain>
    </source>
</reference>
<reference key="4">
    <citation type="journal article" date="2006" name="Mol. Syst. Biol.">
        <title>Highly accurate genome sequences of Escherichia coli K-12 strains MG1655 and W3110.</title>
        <authorList>
            <person name="Hayashi K."/>
            <person name="Morooka N."/>
            <person name="Yamamoto Y."/>
            <person name="Fujita K."/>
            <person name="Isono K."/>
            <person name="Choi S."/>
            <person name="Ohtsubo E."/>
            <person name="Baba T."/>
            <person name="Wanner B.L."/>
            <person name="Mori H."/>
            <person name="Horiuchi T."/>
        </authorList>
    </citation>
    <scope>NUCLEOTIDE SEQUENCE [LARGE SCALE GENOMIC DNA]</scope>
    <source>
        <strain>K12 / W3110 / ATCC 27325 / DSM 5911</strain>
    </source>
</reference>
<reference key="5">
    <citation type="journal article" date="1977" name="FEBS Lett.">
        <title>The NH2-terminal sequences of galactokinase from Escherichia coli and Saccharomyces cerevisiae.</title>
        <authorList>
            <person name="Schlesinger D.H."/>
            <person name="Schell M.A."/>
            <person name="Wilson D.B."/>
        </authorList>
    </citation>
    <scope>PROTEIN SEQUENCE OF 2-20</scope>
    <scope>FUNCTION</scope>
    <scope>CATALYTIC ACTIVITY</scope>
    <source>
        <strain>SA1310</strain>
    </source>
</reference>
<reference key="6">
    <citation type="journal article" date="1994" name="J. Mol. Biol.">
        <title>Dependence of lactose metabolism upon mutarotase encoded in the gal operon in Escherichia coli.</title>
        <authorList>
            <person name="Bouffard G.G."/>
            <person name="Rudd K.E."/>
            <person name="Adhya S.L."/>
        </authorList>
    </citation>
    <scope>NUCLEOTIDE SEQUENCE [GENOMIC DNA] OF 371-382</scope>
</reference>
<reference key="7">
    <citation type="journal article" date="2003" name="Org. Lett.">
        <title>Studies on the substrate specificity of Escherichia coli galactokinase.</title>
        <authorList>
            <person name="Yang J."/>
            <person name="Fu X."/>
            <person name="Jia Q."/>
            <person name="Shen J."/>
            <person name="Biggins J.B."/>
            <person name="Jiang J."/>
            <person name="Zhao J."/>
            <person name="Schmidt J.J."/>
            <person name="Wang P.G."/>
            <person name="Thorson J.S."/>
        </authorList>
    </citation>
    <scope>FUNCTION</scope>
    <scope>CATALYTIC ACTIVITY</scope>
    <scope>SUBSTRATE SPECIFICITY</scope>
    <scope>KINETIC PARAMETERS</scope>
    <source>
        <strain>K12</strain>
    </source>
</reference>
<reference key="8">
    <citation type="journal article" date="2003" name="Proc. Natl. Acad. Sci. U.S.A.">
        <title>Creation of the first anomeric D/L-sugar kinase by means of directed evolution.</title>
        <authorList>
            <person name="Hoffmeister D."/>
            <person name="Yang J."/>
            <person name="Liu L."/>
            <person name="Thorson J.S."/>
        </authorList>
    </citation>
    <scope>FUNCTION</scope>
    <scope>CATALYTIC ACTIVITY</scope>
    <scope>SUBSTRATE SPECIFICITY</scope>
    <scope>KINETIC PARAMETERS</scope>
    <scope>MUTAGENESIS OF TYR-371</scope>
    <source>
        <strain>K12</strain>
    </source>
</reference>
<reference key="9">
    <citation type="journal article" date="2011" name="Bioinformation">
        <title>Comparative modeling and genomics for galactokinase (Gal1p) enzyme.</title>
        <authorList>
            <person name="Sharma A."/>
            <person name="Malakar P."/>
        </authorList>
    </citation>
    <scope>3D-STRUCTURE MODELING</scope>
</reference>
<protein>
    <recommendedName>
        <fullName evidence="1">Galactokinase</fullName>
        <ecNumber evidence="1">2.7.1.6</ecNumber>
    </recommendedName>
    <alternativeName>
        <fullName evidence="1">Galactose kinase</fullName>
    </alternativeName>
</protein>
<dbReference type="EC" id="2.7.1.6" evidence="1"/>
<dbReference type="EMBL" id="X02306">
    <property type="protein sequence ID" value="CAA26172.1"/>
    <property type="molecule type" value="Genomic_DNA"/>
</dbReference>
<dbReference type="EMBL" id="U00096">
    <property type="protein sequence ID" value="AAC73844.1"/>
    <property type="molecule type" value="Genomic_DNA"/>
</dbReference>
<dbReference type="EMBL" id="AP009048">
    <property type="protein sequence ID" value="BAA35419.1"/>
    <property type="molecule type" value="Genomic_DNA"/>
</dbReference>
<dbReference type="EMBL" id="U13636">
    <property type="protein sequence ID" value="AAB17019.1"/>
    <property type="molecule type" value="Genomic_DNA"/>
</dbReference>
<dbReference type="PIR" id="B23044">
    <property type="entry name" value="KIECGG"/>
</dbReference>
<dbReference type="RefSeq" id="NP_415278.1">
    <property type="nucleotide sequence ID" value="NC_000913.3"/>
</dbReference>
<dbReference type="RefSeq" id="WP_000053415.1">
    <property type="nucleotide sequence ID" value="NZ_SSZK01000002.1"/>
</dbReference>
<dbReference type="SMR" id="P0A6T3"/>
<dbReference type="BioGRID" id="4261711">
    <property type="interactions" value="225"/>
</dbReference>
<dbReference type="BioGRID" id="849734">
    <property type="interactions" value="4"/>
</dbReference>
<dbReference type="FunCoup" id="P0A6T3">
    <property type="interactions" value="684"/>
</dbReference>
<dbReference type="IntAct" id="P0A6T3">
    <property type="interactions" value="4"/>
</dbReference>
<dbReference type="STRING" id="511145.b0757"/>
<dbReference type="jPOST" id="P0A6T3"/>
<dbReference type="PaxDb" id="511145-b0757"/>
<dbReference type="EnsemblBacteria" id="AAC73844">
    <property type="protein sequence ID" value="AAC73844"/>
    <property type="gene ID" value="b0757"/>
</dbReference>
<dbReference type="GeneID" id="75170756"/>
<dbReference type="GeneID" id="945358"/>
<dbReference type="KEGG" id="ecj:JW0740"/>
<dbReference type="KEGG" id="eco:b0757"/>
<dbReference type="PATRIC" id="fig|1411691.4.peg.1521"/>
<dbReference type="EchoBASE" id="EB0358"/>
<dbReference type="eggNOG" id="COG0153">
    <property type="taxonomic scope" value="Bacteria"/>
</dbReference>
<dbReference type="HOGENOM" id="CLU_017814_2_1_6"/>
<dbReference type="InParanoid" id="P0A6T3"/>
<dbReference type="OMA" id="VMPCAIN"/>
<dbReference type="OrthoDB" id="250531at2"/>
<dbReference type="PhylomeDB" id="P0A6T3"/>
<dbReference type="BioCyc" id="EcoCyc:GALACTOKIN-MONOMER"/>
<dbReference type="BioCyc" id="MetaCyc:GALACTOKIN-MONOMER"/>
<dbReference type="SABIO-RK" id="P0A6T3"/>
<dbReference type="UniPathway" id="UPA00214"/>
<dbReference type="PHI-base" id="PHI:6269"/>
<dbReference type="PRO" id="PR:P0A6T3"/>
<dbReference type="Proteomes" id="UP000000625">
    <property type="component" value="Chromosome"/>
</dbReference>
<dbReference type="GO" id="GO:0005737">
    <property type="term" value="C:cytoplasm"/>
    <property type="evidence" value="ECO:0000314"/>
    <property type="project" value="EcoliWiki"/>
</dbReference>
<dbReference type="GO" id="GO:0005829">
    <property type="term" value="C:cytosol"/>
    <property type="evidence" value="ECO:0000314"/>
    <property type="project" value="EcoCyc"/>
</dbReference>
<dbReference type="GO" id="GO:0005524">
    <property type="term" value="F:ATP binding"/>
    <property type="evidence" value="ECO:0007669"/>
    <property type="project" value="UniProtKB-UniRule"/>
</dbReference>
<dbReference type="GO" id="GO:0004335">
    <property type="term" value="F:galactokinase activity"/>
    <property type="evidence" value="ECO:0000314"/>
    <property type="project" value="EcoCyc"/>
</dbReference>
<dbReference type="GO" id="GO:0000287">
    <property type="term" value="F:magnesium ion binding"/>
    <property type="evidence" value="ECO:0000314"/>
    <property type="project" value="EcoCyc"/>
</dbReference>
<dbReference type="GO" id="GO:0033499">
    <property type="term" value="P:galactose catabolic process via UDP-galactose, Leloir pathway"/>
    <property type="evidence" value="ECO:0000315"/>
    <property type="project" value="EcoCyc"/>
</dbReference>
<dbReference type="GO" id="GO:0006012">
    <property type="term" value="P:galactose metabolic process"/>
    <property type="evidence" value="ECO:0000318"/>
    <property type="project" value="GO_Central"/>
</dbReference>
<dbReference type="FunFam" id="3.30.230.10:FF:000017">
    <property type="entry name" value="Galactokinase"/>
    <property type="match status" value="1"/>
</dbReference>
<dbReference type="FunFam" id="3.30.70.890:FF:000001">
    <property type="entry name" value="Galactokinase"/>
    <property type="match status" value="1"/>
</dbReference>
<dbReference type="Gene3D" id="3.30.230.10">
    <property type="match status" value="1"/>
</dbReference>
<dbReference type="Gene3D" id="3.30.70.890">
    <property type="entry name" value="GHMP kinase, C-terminal domain"/>
    <property type="match status" value="1"/>
</dbReference>
<dbReference type="HAMAP" id="MF_00246">
    <property type="entry name" value="Galactokinase"/>
    <property type="match status" value="1"/>
</dbReference>
<dbReference type="InterPro" id="IPR000705">
    <property type="entry name" value="Galactokinase"/>
</dbReference>
<dbReference type="InterPro" id="IPR022963">
    <property type="entry name" value="Galactokinase_bac"/>
</dbReference>
<dbReference type="InterPro" id="IPR019741">
    <property type="entry name" value="Galactokinase_CS"/>
</dbReference>
<dbReference type="InterPro" id="IPR019539">
    <property type="entry name" value="GalKase_N"/>
</dbReference>
<dbReference type="InterPro" id="IPR013750">
    <property type="entry name" value="GHMP_kinase_C_dom"/>
</dbReference>
<dbReference type="InterPro" id="IPR036554">
    <property type="entry name" value="GHMP_kinase_C_sf"/>
</dbReference>
<dbReference type="InterPro" id="IPR006204">
    <property type="entry name" value="GHMP_kinase_N_dom"/>
</dbReference>
<dbReference type="InterPro" id="IPR006203">
    <property type="entry name" value="GHMP_knse_ATP-bd_CS"/>
</dbReference>
<dbReference type="InterPro" id="IPR006206">
    <property type="entry name" value="Mevalonate/galactokinase"/>
</dbReference>
<dbReference type="InterPro" id="IPR020568">
    <property type="entry name" value="Ribosomal_Su5_D2-typ_SF"/>
</dbReference>
<dbReference type="InterPro" id="IPR014721">
    <property type="entry name" value="Ribsml_uS5_D2-typ_fold_subgr"/>
</dbReference>
<dbReference type="NCBIfam" id="TIGR00131">
    <property type="entry name" value="gal_kin"/>
    <property type="match status" value="1"/>
</dbReference>
<dbReference type="NCBIfam" id="NF003472">
    <property type="entry name" value="PRK05101.1"/>
    <property type="match status" value="1"/>
</dbReference>
<dbReference type="PANTHER" id="PTHR10457:SF7">
    <property type="entry name" value="GALACTOKINASE-RELATED"/>
    <property type="match status" value="1"/>
</dbReference>
<dbReference type="PANTHER" id="PTHR10457">
    <property type="entry name" value="MEVALONATE KINASE/GALACTOKINASE"/>
    <property type="match status" value="1"/>
</dbReference>
<dbReference type="Pfam" id="PF10509">
    <property type="entry name" value="GalKase_gal_bdg"/>
    <property type="match status" value="1"/>
</dbReference>
<dbReference type="Pfam" id="PF08544">
    <property type="entry name" value="GHMP_kinases_C"/>
    <property type="match status" value="1"/>
</dbReference>
<dbReference type="Pfam" id="PF00288">
    <property type="entry name" value="GHMP_kinases_N"/>
    <property type="match status" value="1"/>
</dbReference>
<dbReference type="PIRSF" id="PIRSF000530">
    <property type="entry name" value="Galactokinase"/>
    <property type="match status" value="1"/>
</dbReference>
<dbReference type="PRINTS" id="PR00473">
    <property type="entry name" value="GALCTOKINASE"/>
</dbReference>
<dbReference type="PRINTS" id="PR00959">
    <property type="entry name" value="MEVGALKINASE"/>
</dbReference>
<dbReference type="SUPFAM" id="SSF55060">
    <property type="entry name" value="GHMP Kinase, C-terminal domain"/>
    <property type="match status" value="1"/>
</dbReference>
<dbReference type="SUPFAM" id="SSF54211">
    <property type="entry name" value="Ribosomal protein S5 domain 2-like"/>
    <property type="match status" value="1"/>
</dbReference>
<dbReference type="PROSITE" id="PS00106">
    <property type="entry name" value="GALACTOKINASE"/>
    <property type="match status" value="1"/>
</dbReference>
<dbReference type="PROSITE" id="PS00627">
    <property type="entry name" value="GHMP_KINASES_ATP"/>
    <property type="match status" value="1"/>
</dbReference>
<feature type="initiator methionine" description="Removed" evidence="4">
    <location>
        <position position="1"/>
    </location>
</feature>
<feature type="chain" id="PRO_0000184607" description="Galactokinase">
    <location>
        <begin position="2"/>
        <end position="382"/>
    </location>
</feature>
<feature type="active site" description="Proton acceptor" evidence="1">
    <location>
        <position position="174"/>
    </location>
</feature>
<feature type="binding site" evidence="1">
    <location>
        <begin position="34"/>
        <end position="37"/>
    </location>
    <ligand>
        <name>substrate</name>
    </ligand>
</feature>
<feature type="binding site" evidence="1">
    <location>
        <begin position="124"/>
        <end position="130"/>
    </location>
    <ligand>
        <name>ATP</name>
        <dbReference type="ChEBI" id="CHEBI:30616"/>
    </ligand>
</feature>
<feature type="binding site" evidence="1">
    <location>
        <position position="130"/>
    </location>
    <ligand>
        <name>Mg(2+)</name>
        <dbReference type="ChEBI" id="CHEBI:18420"/>
    </ligand>
</feature>
<feature type="binding site" evidence="1">
    <location>
        <position position="162"/>
    </location>
    <ligand>
        <name>Mg(2+)</name>
        <dbReference type="ChEBI" id="CHEBI:18420"/>
    </ligand>
</feature>
<feature type="binding site" evidence="1">
    <location>
        <position position="223"/>
    </location>
    <ligand>
        <name>substrate</name>
    </ligand>
</feature>
<feature type="site" description="Transition state stabilizer" evidence="1">
    <location>
        <position position="28"/>
    </location>
</feature>
<feature type="mutagenesis site" description="Displays relaxed substrate specificity since it gains kinase activity toward sugars as diverse as D-galacturonic acid, D-talose, L-altrose, and L-glucose. Also shows enhanced turnover of the small pool of sugars converted by the wild-type enzyme." evidence="3">
    <original>Y</original>
    <variation>H</variation>
    <location>
        <position position="371"/>
    </location>
</feature>
<gene>
    <name evidence="1" type="primary">galK</name>
    <name type="synonym">galA</name>
    <name type="ordered locus">b0757</name>
    <name type="ordered locus">JW0740</name>
</gene>
<evidence type="ECO:0000255" key="1">
    <source>
        <dbReference type="HAMAP-Rule" id="MF_00246"/>
    </source>
</evidence>
<evidence type="ECO:0000269" key="2">
    <source>
    </source>
</evidence>
<evidence type="ECO:0000269" key="3">
    <source>
    </source>
</evidence>
<evidence type="ECO:0000269" key="4">
    <source>
    </source>
</evidence>
<proteinExistence type="evidence at protein level"/>
<comment type="function">
    <text evidence="1 2 3 4">Catalyzes the transfer of the gamma-phosphate of ATP to D-galactose to form alpha-D-galactose-1-phosphate (Gal-1-P). To a lesser extent, is also able to phosphorylate 2-deoxy-D-galactose and D-galactosamine. Is not able to use D-galacturonic acid, D-talose, L-altrose, and L-glucose as substrates.</text>
</comment>
<comment type="catalytic activity">
    <reaction evidence="1 2 3 4">
        <text>alpha-D-galactose + ATP = alpha-D-galactose 1-phosphate + ADP + H(+)</text>
        <dbReference type="Rhea" id="RHEA:13553"/>
        <dbReference type="ChEBI" id="CHEBI:15378"/>
        <dbReference type="ChEBI" id="CHEBI:28061"/>
        <dbReference type="ChEBI" id="CHEBI:30616"/>
        <dbReference type="ChEBI" id="CHEBI:58336"/>
        <dbReference type="ChEBI" id="CHEBI:456216"/>
        <dbReference type="EC" id="2.7.1.6"/>
    </reaction>
</comment>
<comment type="biophysicochemical properties">
    <kinetics>
        <KM evidence="2 3">2.1 mM for D-galactose</KM>
        <KM evidence="2 3">3.6 mM for 2-deoxy-D-galactose</KM>
        <KM evidence="2 3">2.9 mM for D-galactosamine</KM>
        <KM evidence="2 3">2.5 mM for ATP</KM>
        <Vmax evidence="2 3">1.65 umol/min/mg enzyme with D-galactose as substrate</Vmax>
        <text>kcat is 108 min(-1), 30 min(-1) and 11.7 min(-1) with D-galactose, 2-deoxy-D-galactose, and D-galactosamine as substrate, respectively.</text>
    </kinetics>
</comment>
<comment type="pathway">
    <text evidence="1">Carbohydrate metabolism; galactose metabolism.</text>
</comment>
<comment type="subcellular location">
    <subcellularLocation>
        <location evidence="1">Cytoplasm</location>
    </subcellularLocation>
</comment>
<comment type="similarity">
    <text evidence="1">Belongs to the GHMP kinase family. GalK subfamily.</text>
</comment>